<proteinExistence type="inferred from homology"/>
<evidence type="ECO:0000255" key="1">
    <source>
        <dbReference type="HAMAP-Rule" id="MF_01331"/>
    </source>
</evidence>
<evidence type="ECO:0000305" key="2"/>
<feature type="chain" id="PRO_0000354450" description="Large ribosomal subunit protein uL22">
    <location>
        <begin position="1"/>
        <end position="124"/>
    </location>
</feature>
<protein>
    <recommendedName>
        <fullName evidence="1">Large ribosomal subunit protein uL22</fullName>
    </recommendedName>
    <alternativeName>
        <fullName evidence="2">50S ribosomal protein L22</fullName>
    </alternativeName>
</protein>
<keyword id="KW-1185">Reference proteome</keyword>
<keyword id="KW-0687">Ribonucleoprotein</keyword>
<keyword id="KW-0689">Ribosomal protein</keyword>
<keyword id="KW-0694">RNA-binding</keyword>
<keyword id="KW-0699">rRNA-binding</keyword>
<name>RL22_BUCCC</name>
<sequence length="124" mass="13776">MNVLAKYNQVRSSAQKIRLIANIIRGKKALLALQILSSVKKKAALLVKKLLKSALSNAEHNYGYNKEVLIISKIFVNSGSSMKRMMPRAKGRADRILKRTSHITVILSDIKKNPEGYNGSKSTP</sequence>
<gene>
    <name evidence="1" type="primary">rplV</name>
    <name type="ordered locus">BCc_336</name>
</gene>
<accession>Q057A9</accession>
<dbReference type="EMBL" id="CP000263">
    <property type="protein sequence ID" value="ABJ90790.1"/>
    <property type="molecule type" value="Genomic_DNA"/>
</dbReference>
<dbReference type="RefSeq" id="WP_011672709.1">
    <property type="nucleotide sequence ID" value="NC_008513.1"/>
</dbReference>
<dbReference type="SMR" id="Q057A9"/>
<dbReference type="STRING" id="372461.BCc_336"/>
<dbReference type="KEGG" id="bcc:BCc_336"/>
<dbReference type="eggNOG" id="COG0091">
    <property type="taxonomic scope" value="Bacteria"/>
</dbReference>
<dbReference type="HOGENOM" id="CLU_083987_3_3_6"/>
<dbReference type="OrthoDB" id="9805969at2"/>
<dbReference type="Proteomes" id="UP000000669">
    <property type="component" value="Chromosome"/>
</dbReference>
<dbReference type="GO" id="GO:0022625">
    <property type="term" value="C:cytosolic large ribosomal subunit"/>
    <property type="evidence" value="ECO:0007669"/>
    <property type="project" value="TreeGrafter"/>
</dbReference>
<dbReference type="GO" id="GO:0019843">
    <property type="term" value="F:rRNA binding"/>
    <property type="evidence" value="ECO:0007669"/>
    <property type="project" value="UniProtKB-UniRule"/>
</dbReference>
<dbReference type="GO" id="GO:0003735">
    <property type="term" value="F:structural constituent of ribosome"/>
    <property type="evidence" value="ECO:0007669"/>
    <property type="project" value="InterPro"/>
</dbReference>
<dbReference type="GO" id="GO:0006412">
    <property type="term" value="P:translation"/>
    <property type="evidence" value="ECO:0007669"/>
    <property type="project" value="UniProtKB-UniRule"/>
</dbReference>
<dbReference type="CDD" id="cd00336">
    <property type="entry name" value="Ribosomal_L22"/>
    <property type="match status" value="1"/>
</dbReference>
<dbReference type="Gene3D" id="3.90.470.10">
    <property type="entry name" value="Ribosomal protein L22/L17"/>
    <property type="match status" value="1"/>
</dbReference>
<dbReference type="HAMAP" id="MF_01331_B">
    <property type="entry name" value="Ribosomal_uL22_B"/>
    <property type="match status" value="1"/>
</dbReference>
<dbReference type="InterPro" id="IPR001063">
    <property type="entry name" value="Ribosomal_uL22"/>
</dbReference>
<dbReference type="InterPro" id="IPR005727">
    <property type="entry name" value="Ribosomal_uL22_bac/chlpt-type"/>
</dbReference>
<dbReference type="InterPro" id="IPR047867">
    <property type="entry name" value="Ribosomal_uL22_bac/org-type"/>
</dbReference>
<dbReference type="InterPro" id="IPR018260">
    <property type="entry name" value="Ribosomal_uL22_CS"/>
</dbReference>
<dbReference type="InterPro" id="IPR036394">
    <property type="entry name" value="Ribosomal_uL22_sf"/>
</dbReference>
<dbReference type="NCBIfam" id="TIGR01044">
    <property type="entry name" value="rplV_bact"/>
    <property type="match status" value="1"/>
</dbReference>
<dbReference type="PANTHER" id="PTHR13501">
    <property type="entry name" value="CHLOROPLAST 50S RIBOSOMAL PROTEIN L22-RELATED"/>
    <property type="match status" value="1"/>
</dbReference>
<dbReference type="PANTHER" id="PTHR13501:SF8">
    <property type="entry name" value="LARGE RIBOSOMAL SUBUNIT PROTEIN UL22M"/>
    <property type="match status" value="1"/>
</dbReference>
<dbReference type="Pfam" id="PF00237">
    <property type="entry name" value="Ribosomal_L22"/>
    <property type="match status" value="1"/>
</dbReference>
<dbReference type="SUPFAM" id="SSF54843">
    <property type="entry name" value="Ribosomal protein L22"/>
    <property type="match status" value="1"/>
</dbReference>
<dbReference type="PROSITE" id="PS00464">
    <property type="entry name" value="RIBOSOMAL_L22"/>
    <property type="match status" value="1"/>
</dbReference>
<organism>
    <name type="scientific">Buchnera aphidicola subsp. Cinara cedri (strain Cc)</name>
    <dbReference type="NCBI Taxonomy" id="372461"/>
    <lineage>
        <taxon>Bacteria</taxon>
        <taxon>Pseudomonadati</taxon>
        <taxon>Pseudomonadota</taxon>
        <taxon>Gammaproteobacteria</taxon>
        <taxon>Enterobacterales</taxon>
        <taxon>Erwiniaceae</taxon>
        <taxon>Buchnera</taxon>
    </lineage>
</organism>
<reference key="1">
    <citation type="journal article" date="2006" name="Science">
        <title>A small microbial genome: the end of a long symbiotic relationship?</title>
        <authorList>
            <person name="Perez-Brocal V."/>
            <person name="Gil R."/>
            <person name="Ramos S."/>
            <person name="Lamelas A."/>
            <person name="Postigo M."/>
            <person name="Michelena J.M."/>
            <person name="Silva F.J."/>
            <person name="Moya A."/>
            <person name="Latorre A."/>
        </authorList>
    </citation>
    <scope>NUCLEOTIDE SEQUENCE [LARGE SCALE GENOMIC DNA]</scope>
    <source>
        <strain>Cc</strain>
    </source>
</reference>
<comment type="function">
    <text evidence="1">This protein binds specifically to 23S rRNA; its binding is stimulated by other ribosomal proteins, e.g. L4, L17, and L20. It is important during the early stages of 50S assembly. It makes multiple contacts with different domains of the 23S rRNA in the assembled 50S subunit and ribosome (By similarity).</text>
</comment>
<comment type="function">
    <text evidence="1">The globular domain of the protein is located near the polypeptide exit tunnel on the outside of the subunit, while an extended beta-hairpin is found that lines the wall of the exit tunnel in the center of the 70S ribosome.</text>
</comment>
<comment type="subunit">
    <text evidence="1">Part of the 50S ribosomal subunit.</text>
</comment>
<comment type="similarity">
    <text evidence="1">Belongs to the universal ribosomal protein uL22 family.</text>
</comment>